<gene>
    <name type="primary">cycA</name>
    <name type="ordered locus">blr7544</name>
</gene>
<protein>
    <recommendedName>
        <fullName>Cytochrome c-550</fullName>
    </recommendedName>
    <alternativeName>
        <fullName>Cytochrome c550</fullName>
    </alternativeName>
</protein>
<proteinExistence type="evidence at protein level"/>
<accession>Q45233</accession>
<organism>
    <name type="scientific">Bradyrhizobium diazoefficiens (strain JCM 10833 / BCRC 13528 / IAM 13628 / NBRC 14792 / USDA 110)</name>
    <dbReference type="NCBI Taxonomy" id="224911"/>
    <lineage>
        <taxon>Bacteria</taxon>
        <taxon>Pseudomonadati</taxon>
        <taxon>Pseudomonadota</taxon>
        <taxon>Alphaproteobacteria</taxon>
        <taxon>Hyphomicrobiales</taxon>
        <taxon>Nitrobacteraceae</taxon>
        <taxon>Bradyrhizobium</taxon>
    </lineage>
</organism>
<keyword id="KW-0903">Direct protein sequencing</keyword>
<keyword id="KW-0249">Electron transport</keyword>
<keyword id="KW-0349">Heme</keyword>
<keyword id="KW-0408">Iron</keyword>
<keyword id="KW-0479">Metal-binding</keyword>
<keyword id="KW-0574">Periplasm</keyword>
<keyword id="KW-1185">Reference proteome</keyword>
<keyword id="KW-0732">Signal</keyword>
<keyword id="KW-0813">Transport</keyword>
<name>CY550_BRADU</name>
<feature type="signal peptide" evidence="1">
    <location>
        <begin position="1"/>
        <end position="28"/>
    </location>
</feature>
<feature type="chain" id="PRO_0000006522" description="Cytochrome c-550">
    <location>
        <begin position="29"/>
        <end position="136"/>
    </location>
</feature>
<feature type="binding site" description="covalent" evidence="2">
    <location>
        <position position="41"/>
    </location>
    <ligand>
        <name>heme c</name>
        <dbReference type="ChEBI" id="CHEBI:61717"/>
    </ligand>
</feature>
<feature type="binding site" description="covalent" evidence="2">
    <location>
        <position position="44"/>
    </location>
    <ligand>
        <name>heme c</name>
        <dbReference type="ChEBI" id="CHEBI:61717"/>
    </ligand>
</feature>
<feature type="binding site" description="axial binding residue" evidence="2">
    <location>
        <position position="45"/>
    </location>
    <ligand>
        <name>heme c</name>
        <dbReference type="ChEBI" id="CHEBI:61717"/>
    </ligand>
    <ligandPart>
        <name>Fe</name>
        <dbReference type="ChEBI" id="CHEBI:18248"/>
    </ligandPart>
</feature>
<feature type="binding site" description="axial binding residue" evidence="2">
    <location>
        <position position="107"/>
    </location>
    <ligand>
        <name>heme c</name>
        <dbReference type="ChEBI" id="CHEBI:61717"/>
    </ligand>
    <ligandPart>
        <name>Fe</name>
        <dbReference type="ChEBI" id="CHEBI:18248"/>
    </ligandPart>
</feature>
<feature type="sequence conflict" description="In Ref. 1; AA sequence." evidence="3" ref="1">
    <original>APD</original>
    <variation>VEG</variation>
    <location>
        <begin position="70"/>
        <end position="72"/>
    </location>
</feature>
<feature type="sequence conflict" description="In Ref. 1; AA sequence." evidence="3" ref="1">
    <original>S</original>
    <variation>T</variation>
    <location>
        <position position="76"/>
    </location>
</feature>
<feature type="sequence conflict" description="In Ref. 1; AA sequence." evidence="3" ref="1">
    <original>T</original>
    <variation>V</variation>
    <location>
        <position position="90"/>
    </location>
</feature>
<feature type="sequence conflict" description="In Ref. 1; AA sequence." evidence="3" ref="1">
    <original>TFVSQ</original>
    <variation>AYVAD</variation>
    <location>
        <begin position="123"/>
        <end position="127"/>
    </location>
</feature>
<dbReference type="EMBL" id="L39642">
    <property type="protein sequence ID" value="AAA74907.1"/>
    <property type="molecule type" value="Genomic_DNA"/>
</dbReference>
<dbReference type="EMBL" id="BA000040">
    <property type="protein sequence ID" value="BAC52809.1"/>
    <property type="molecule type" value="Genomic_DNA"/>
</dbReference>
<dbReference type="PIR" id="A56280">
    <property type="entry name" value="A56280"/>
</dbReference>
<dbReference type="RefSeq" id="NP_774184.1">
    <property type="nucleotide sequence ID" value="NC_004463.1"/>
</dbReference>
<dbReference type="RefSeq" id="WP_011090276.1">
    <property type="nucleotide sequence ID" value="NC_004463.1"/>
</dbReference>
<dbReference type="SMR" id="Q45233"/>
<dbReference type="STRING" id="224911.AAV28_35395"/>
<dbReference type="EnsemblBacteria" id="BAC52809">
    <property type="protein sequence ID" value="BAC52809"/>
    <property type="gene ID" value="BAC52809"/>
</dbReference>
<dbReference type="GeneID" id="46494497"/>
<dbReference type="KEGG" id="bja:blr7544"/>
<dbReference type="PATRIC" id="fig|224911.44.peg.7647"/>
<dbReference type="eggNOG" id="COG3474">
    <property type="taxonomic scope" value="Bacteria"/>
</dbReference>
<dbReference type="HOGENOM" id="CLU_060944_2_1_5"/>
<dbReference type="InParanoid" id="Q45233"/>
<dbReference type="OrthoDB" id="9805828at2"/>
<dbReference type="PhylomeDB" id="Q45233"/>
<dbReference type="Proteomes" id="UP000002526">
    <property type="component" value="Chromosome"/>
</dbReference>
<dbReference type="GO" id="GO:0042597">
    <property type="term" value="C:periplasmic space"/>
    <property type="evidence" value="ECO:0007669"/>
    <property type="project" value="UniProtKB-SubCell"/>
</dbReference>
<dbReference type="GO" id="GO:0009055">
    <property type="term" value="F:electron transfer activity"/>
    <property type="evidence" value="ECO:0007669"/>
    <property type="project" value="InterPro"/>
</dbReference>
<dbReference type="GO" id="GO:0020037">
    <property type="term" value="F:heme binding"/>
    <property type="evidence" value="ECO:0007669"/>
    <property type="project" value="InterPro"/>
</dbReference>
<dbReference type="GO" id="GO:0046872">
    <property type="term" value="F:metal ion binding"/>
    <property type="evidence" value="ECO:0007669"/>
    <property type="project" value="UniProtKB-KW"/>
</dbReference>
<dbReference type="FunFam" id="1.10.760.10:FF:000001">
    <property type="entry name" value="Cytochrome c iso-1"/>
    <property type="match status" value="1"/>
</dbReference>
<dbReference type="Gene3D" id="1.10.760.10">
    <property type="entry name" value="Cytochrome c-like domain"/>
    <property type="match status" value="1"/>
</dbReference>
<dbReference type="InterPro" id="IPR009056">
    <property type="entry name" value="Cyt_c-like_dom"/>
</dbReference>
<dbReference type="InterPro" id="IPR036909">
    <property type="entry name" value="Cyt_c-like_dom_sf"/>
</dbReference>
<dbReference type="InterPro" id="IPR002327">
    <property type="entry name" value="Cyt_c_1A/1B"/>
</dbReference>
<dbReference type="InterPro" id="IPR053567">
    <property type="entry name" value="Cytochrome_c-550-like"/>
</dbReference>
<dbReference type="NCBIfam" id="NF043008">
    <property type="entry name" value="Cyt550_Brdyrhiz"/>
    <property type="match status" value="1"/>
</dbReference>
<dbReference type="PANTHER" id="PTHR11961">
    <property type="entry name" value="CYTOCHROME C"/>
    <property type="match status" value="1"/>
</dbReference>
<dbReference type="Pfam" id="PF00034">
    <property type="entry name" value="Cytochrom_C"/>
    <property type="match status" value="1"/>
</dbReference>
<dbReference type="PRINTS" id="PR00604">
    <property type="entry name" value="CYTCHRMECIAB"/>
</dbReference>
<dbReference type="SUPFAM" id="SSF46626">
    <property type="entry name" value="Cytochrome c"/>
    <property type="match status" value="1"/>
</dbReference>
<dbReference type="PROSITE" id="PS51007">
    <property type="entry name" value="CYTC"/>
    <property type="match status" value="1"/>
</dbReference>
<sequence length="136" mass="14432">MTKLTFGALVALAMTAAASTAMSSKAMAQDAAAGKTSFNKCLACHAIGEGAKNKVGPELNGLNGRKSGTAPDYSYSDANKNSGITWDEATFKEYIKDPKAKIPGTKMAFAGIKNETEINNLWTFVSQFDKDGKIKQ</sequence>
<evidence type="ECO:0000255" key="1"/>
<evidence type="ECO:0000255" key="2">
    <source>
        <dbReference type="PROSITE-ProRule" id="PRU00433"/>
    </source>
</evidence>
<evidence type="ECO:0000305" key="3"/>
<reference key="1">
    <citation type="journal article" date="1995" name="J. Bacteriol.">
        <title>Bradyrhizobium japonicum cytochrome c550 is required for nitrate respiration but not for symbiotic nitrogen fixation.</title>
        <authorList>
            <person name="Bott M."/>
            <person name="Thoeny-Meyer L."/>
            <person name="Loferer H."/>
            <person name="Rossbach S."/>
            <person name="Tully R.E."/>
            <person name="Keister D."/>
            <person name="Appleby C.A."/>
            <person name="Hennecke H."/>
        </authorList>
    </citation>
    <scope>NUCLEOTIDE SEQUENCE [GENOMIC DNA]</scope>
    <scope>PROTEIN SEQUENCE OF 66-92 AND 107-130</scope>
    <source>
        <strain>CC705 / UW505</strain>
        <strain>USDA 110spc4</strain>
    </source>
</reference>
<reference key="2">
    <citation type="journal article" date="2002" name="DNA Res.">
        <title>Complete genomic sequence of nitrogen-fixing symbiotic bacterium Bradyrhizobium japonicum USDA110.</title>
        <authorList>
            <person name="Kaneko T."/>
            <person name="Nakamura Y."/>
            <person name="Sato S."/>
            <person name="Minamisawa K."/>
            <person name="Uchiumi T."/>
            <person name="Sasamoto S."/>
            <person name="Watanabe A."/>
            <person name="Idesawa K."/>
            <person name="Iriguchi M."/>
            <person name="Kawashima K."/>
            <person name="Kohara M."/>
            <person name="Matsumoto M."/>
            <person name="Shimpo S."/>
            <person name="Tsuruoka H."/>
            <person name="Wada T."/>
            <person name="Yamada M."/>
            <person name="Tabata S."/>
        </authorList>
    </citation>
    <scope>NUCLEOTIDE SEQUENCE [LARGE SCALE GENOMIC DNA]</scope>
    <source>
        <strain>JCM 10833 / BCRC 13528 / IAM 13628 / NBRC 14792 / USDA 110</strain>
    </source>
</reference>
<comment type="function">
    <text>Plays a role in bacteroid respiration under conditions of oxygen limitation. Required for electron-transfer during denitrification.</text>
</comment>
<comment type="biophysicochemical properties">
    <redoxPotential>
        <text>E(0) is about +280 mV.</text>
    </redoxPotential>
</comment>
<comment type="subcellular location">
    <subcellularLocation>
        <location>Periplasm</location>
    </subcellularLocation>
</comment>
<comment type="PTM">
    <text>Binds 1 heme c group covalently per subunit.</text>
</comment>
<comment type="PTM">
    <text>The N-terminus is blocked.</text>
</comment>